<gene>
    <name type="primary">acbA</name>
    <name type="ORF">DDB_G0270658</name>
</gene>
<comment type="function">
    <text evidence="4 5 6">Binds to acyl-CoA. Processed into the SDF-2 (spore differentiation factor 2) a peptide which triggers sporulation. SDF-2 appears to stimulate prestalk cells to release additional SDF-2 by acting through a signal transduction pathway that also involves dhkA, regA and PKA. Induces encapsulation of prespore cells in a dhkA-dependent manner. GABA induces the release of acbA from prespore cells and induces the exposure of tagC on the surface of prestalk cells where it can convert acbA to SDF-2. Glutamate acts as a competitive inhibitor and is also able to inhibit induction of sporulation by SDF-2.</text>
</comment>
<comment type="subunit">
    <text evidence="4">Interacts with dhkA.</text>
</comment>
<comment type="developmental stage">
    <text evidence="5">Expressed in vegetative cells but is rapidly turned over during early development before reaccumulating during late development in prespore cells but not in prestalk cells. Expression decreases in early development and reappears in late development. Highly expressed in prespore cells at the slug stage (at protein level).</text>
</comment>
<comment type="disruption phenotype">
    <text evidence="5">Cells form fruiting bodies with a reduction of 90% of viable spores and without SDF-2 activity. Diazepam (Valium) can mimic SDF-2 in Dictyostelium bioassay.</text>
</comment>
<comment type="similarity">
    <text evidence="7">Belongs to the ACBP family.</text>
</comment>
<organism>
    <name type="scientific">Dictyostelium discoideum</name>
    <name type="common">Social amoeba</name>
    <dbReference type="NCBI Taxonomy" id="44689"/>
    <lineage>
        <taxon>Eukaryota</taxon>
        <taxon>Amoebozoa</taxon>
        <taxon>Evosea</taxon>
        <taxon>Eumycetozoa</taxon>
        <taxon>Dictyostelia</taxon>
        <taxon>Dictyosteliales</taxon>
        <taxon>Dictyosteliaceae</taxon>
        <taxon>Dictyostelium</taxon>
    </lineage>
</organism>
<name>ACBP_DICDI</name>
<proteinExistence type="evidence at protein level"/>
<accession>Q5FXM5</accession>
<accession>Q55D10</accession>
<sequence>MTTFEEAAQKVKEFTKKPSNDELLSLYGLYKQGTDGDCNISEPWAVQVEAKAKYNAWNALKGTSKEDAKAKYVALYEQLATKYA</sequence>
<protein>
    <recommendedName>
        <fullName>Acyl-CoA-binding protein</fullName>
        <shortName>ACBP</shortName>
    </recommendedName>
    <component>
        <recommendedName>
            <fullName>SDF-2</fullName>
        </recommendedName>
    </component>
</protein>
<evidence type="ECO:0000250" key="1"/>
<evidence type="ECO:0000255" key="2"/>
<evidence type="ECO:0000255" key="3">
    <source>
        <dbReference type="PROSITE-ProRule" id="PRU00573"/>
    </source>
</evidence>
<evidence type="ECO:0000269" key="4">
    <source>
    </source>
</evidence>
<evidence type="ECO:0000269" key="5">
    <source>
    </source>
</evidence>
<evidence type="ECO:0000269" key="6">
    <source>
    </source>
</evidence>
<evidence type="ECO:0000305" key="7"/>
<keyword id="KW-0932">Cytokinin signaling pathway</keyword>
<keyword id="KW-0217">Developmental protein</keyword>
<keyword id="KW-0221">Differentiation</keyword>
<keyword id="KW-0446">Lipid-binding</keyword>
<keyword id="KW-1185">Reference proteome</keyword>
<keyword id="KW-0749">Sporulation</keyword>
<keyword id="KW-0813">Transport</keyword>
<dbReference type="EMBL" id="AY878075">
    <property type="protein sequence ID" value="AAW70088.1"/>
    <property type="molecule type" value="Genomic_DNA"/>
</dbReference>
<dbReference type="EMBL" id="AAFI02000005">
    <property type="protein sequence ID" value="EAL72679.1"/>
    <property type="molecule type" value="Genomic_DNA"/>
</dbReference>
<dbReference type="RefSeq" id="XP_646321.1">
    <property type="nucleotide sequence ID" value="XM_641229.1"/>
</dbReference>
<dbReference type="SMR" id="Q5FXM5"/>
<dbReference type="FunCoup" id="Q5FXM5">
    <property type="interactions" value="233"/>
</dbReference>
<dbReference type="STRING" id="44689.Q5FXM5"/>
<dbReference type="PaxDb" id="44689-DDB0231469"/>
<dbReference type="EnsemblProtists" id="EAL72679">
    <property type="protein sequence ID" value="EAL72679"/>
    <property type="gene ID" value="DDB_G0270658"/>
</dbReference>
<dbReference type="GeneID" id="8617276"/>
<dbReference type="KEGG" id="ddi:DDB_G0270658"/>
<dbReference type="dictyBase" id="DDB_G0270658">
    <property type="gene designation" value="acbA"/>
</dbReference>
<dbReference type="VEuPathDB" id="AmoebaDB:DDB_G0270658"/>
<dbReference type="eggNOG" id="KOG0817">
    <property type="taxonomic scope" value="Eukaryota"/>
</dbReference>
<dbReference type="HOGENOM" id="CLU_118853_4_1_1"/>
<dbReference type="InParanoid" id="Q5FXM5"/>
<dbReference type="OMA" id="RYKFEAW"/>
<dbReference type="PhylomeDB" id="Q5FXM5"/>
<dbReference type="Reactome" id="R-DDI-77289">
    <property type="pathway name" value="Mitochondrial Fatty Acid Beta-Oxidation"/>
</dbReference>
<dbReference type="PRO" id="PR:Q5FXM5"/>
<dbReference type="Proteomes" id="UP000002195">
    <property type="component" value="Chromosome 1"/>
</dbReference>
<dbReference type="GO" id="GO:0005938">
    <property type="term" value="C:cell cortex"/>
    <property type="evidence" value="ECO:0000315"/>
    <property type="project" value="dictyBase"/>
</dbReference>
<dbReference type="GO" id="GO:0005576">
    <property type="term" value="C:extracellular region"/>
    <property type="evidence" value="ECO:0000315"/>
    <property type="project" value="dictyBase"/>
</dbReference>
<dbReference type="GO" id="GO:0031982">
    <property type="term" value="C:vesicle"/>
    <property type="evidence" value="ECO:0000315"/>
    <property type="project" value="dictyBase"/>
</dbReference>
<dbReference type="GO" id="GO:0000062">
    <property type="term" value="F:fatty-acyl-CoA binding"/>
    <property type="evidence" value="ECO:0000314"/>
    <property type="project" value="dictyBase"/>
</dbReference>
<dbReference type="GO" id="GO:0019901">
    <property type="term" value="F:protein kinase binding"/>
    <property type="evidence" value="ECO:0000316"/>
    <property type="project" value="dictyBase"/>
</dbReference>
<dbReference type="GO" id="GO:0004860">
    <property type="term" value="F:protein kinase inhibitor activity"/>
    <property type="evidence" value="ECO:0000315"/>
    <property type="project" value="dictyBase"/>
</dbReference>
<dbReference type="GO" id="GO:0030154">
    <property type="term" value="P:cell differentiation"/>
    <property type="evidence" value="ECO:0007669"/>
    <property type="project" value="UniProtKB-KW"/>
</dbReference>
<dbReference type="GO" id="GO:0031154">
    <property type="term" value="P:culmination involved in sorocarp development"/>
    <property type="evidence" value="ECO:0000270"/>
    <property type="project" value="dictyBase"/>
</dbReference>
<dbReference type="GO" id="GO:0009736">
    <property type="term" value="P:cytokinin-activated signaling pathway"/>
    <property type="evidence" value="ECO:0007669"/>
    <property type="project" value="UniProtKB-KW"/>
</dbReference>
<dbReference type="GO" id="GO:0006974">
    <property type="term" value="P:DNA damage response"/>
    <property type="evidence" value="ECO:0000315"/>
    <property type="project" value="dictyBase"/>
</dbReference>
<dbReference type="GO" id="GO:0006631">
    <property type="term" value="P:fatty acid metabolic process"/>
    <property type="evidence" value="ECO:0000318"/>
    <property type="project" value="GO_Central"/>
</dbReference>
<dbReference type="GO" id="GO:0016485">
    <property type="term" value="P:protein processing"/>
    <property type="evidence" value="ECO:0000314"/>
    <property type="project" value="dictyBase"/>
</dbReference>
<dbReference type="GO" id="GO:0030435">
    <property type="term" value="P:sporulation resulting in formation of a cellular spore"/>
    <property type="evidence" value="ECO:0000315"/>
    <property type="project" value="dictyBase"/>
</dbReference>
<dbReference type="Gene3D" id="1.20.80.10">
    <property type="match status" value="1"/>
</dbReference>
<dbReference type="InterPro" id="IPR022408">
    <property type="entry name" value="Acyl-CoA-binding_prot_CS"/>
</dbReference>
<dbReference type="InterPro" id="IPR000582">
    <property type="entry name" value="Acyl-CoA-binding_protein"/>
</dbReference>
<dbReference type="InterPro" id="IPR035984">
    <property type="entry name" value="Acyl-CoA-binding_sf"/>
</dbReference>
<dbReference type="InterPro" id="IPR014352">
    <property type="entry name" value="FERM/acyl-CoA-bd_prot_sf"/>
</dbReference>
<dbReference type="PANTHER" id="PTHR23310:SF62">
    <property type="entry name" value="ACYL-COA BINDING PROTEIN 1, ISOFORM A"/>
    <property type="match status" value="1"/>
</dbReference>
<dbReference type="PANTHER" id="PTHR23310">
    <property type="entry name" value="ACYL-COA-BINDING PROTEIN, ACBP"/>
    <property type="match status" value="1"/>
</dbReference>
<dbReference type="Pfam" id="PF00887">
    <property type="entry name" value="ACBP"/>
    <property type="match status" value="1"/>
</dbReference>
<dbReference type="PRINTS" id="PR00689">
    <property type="entry name" value="ACOABINDINGP"/>
</dbReference>
<dbReference type="SUPFAM" id="SSF47027">
    <property type="entry name" value="Acyl-CoA binding protein"/>
    <property type="match status" value="1"/>
</dbReference>
<dbReference type="PROSITE" id="PS00880">
    <property type="entry name" value="ACB_1"/>
    <property type="match status" value="1"/>
</dbReference>
<dbReference type="PROSITE" id="PS51228">
    <property type="entry name" value="ACB_2"/>
    <property type="match status" value="1"/>
</dbReference>
<reference key="1">
    <citation type="journal article" date="2005" name="Proc. Natl. Acad. Sci. U.S.A.">
        <title>Peptide signaling during terminal differentiation of Dictyostelium.</title>
        <authorList>
            <person name="Anjard C."/>
            <person name="Loomis W.F."/>
        </authorList>
    </citation>
    <scope>NUCLEOTIDE SEQUENCE [GENOMIC DNA]</scope>
    <scope>FUNCTION</scope>
    <scope>DEVELOPMENTAL STAGE</scope>
    <scope>SYNTHESIS OF 18-52; 18-31 AND 32-52</scope>
    <scope>DISRUPTION PHENOTYPE</scope>
    <source>
        <strain>AX4</strain>
    </source>
</reference>
<reference key="2">
    <citation type="journal article" date="2005" name="Nature">
        <title>The genome of the social amoeba Dictyostelium discoideum.</title>
        <authorList>
            <person name="Eichinger L."/>
            <person name="Pachebat J.A."/>
            <person name="Gloeckner G."/>
            <person name="Rajandream M.A."/>
            <person name="Sucgang R."/>
            <person name="Berriman M."/>
            <person name="Song J."/>
            <person name="Olsen R."/>
            <person name="Szafranski K."/>
            <person name="Xu Q."/>
            <person name="Tunggal B."/>
            <person name="Kummerfeld S."/>
            <person name="Madera M."/>
            <person name="Konfortov B.A."/>
            <person name="Rivero F."/>
            <person name="Bankier A.T."/>
            <person name="Lehmann R."/>
            <person name="Hamlin N."/>
            <person name="Davies R."/>
            <person name="Gaudet P."/>
            <person name="Fey P."/>
            <person name="Pilcher K."/>
            <person name="Chen G."/>
            <person name="Saunders D."/>
            <person name="Sodergren E.J."/>
            <person name="Davis P."/>
            <person name="Kerhornou A."/>
            <person name="Nie X."/>
            <person name="Hall N."/>
            <person name="Anjard C."/>
            <person name="Hemphill L."/>
            <person name="Bason N."/>
            <person name="Farbrother P."/>
            <person name="Desany B."/>
            <person name="Just E."/>
            <person name="Morio T."/>
            <person name="Rost R."/>
            <person name="Churcher C.M."/>
            <person name="Cooper J."/>
            <person name="Haydock S."/>
            <person name="van Driessche N."/>
            <person name="Cronin A."/>
            <person name="Goodhead I."/>
            <person name="Muzny D.M."/>
            <person name="Mourier T."/>
            <person name="Pain A."/>
            <person name="Lu M."/>
            <person name="Harper D."/>
            <person name="Lindsay R."/>
            <person name="Hauser H."/>
            <person name="James K.D."/>
            <person name="Quiles M."/>
            <person name="Madan Babu M."/>
            <person name="Saito T."/>
            <person name="Buchrieser C."/>
            <person name="Wardroper A."/>
            <person name="Felder M."/>
            <person name="Thangavelu M."/>
            <person name="Johnson D."/>
            <person name="Knights A."/>
            <person name="Loulseged H."/>
            <person name="Mungall K.L."/>
            <person name="Oliver K."/>
            <person name="Price C."/>
            <person name="Quail M.A."/>
            <person name="Urushihara H."/>
            <person name="Hernandez J."/>
            <person name="Rabbinowitsch E."/>
            <person name="Steffen D."/>
            <person name="Sanders M."/>
            <person name="Ma J."/>
            <person name="Kohara Y."/>
            <person name="Sharp S."/>
            <person name="Simmonds M.N."/>
            <person name="Spiegler S."/>
            <person name="Tivey A."/>
            <person name="Sugano S."/>
            <person name="White B."/>
            <person name="Walker D."/>
            <person name="Woodward J.R."/>
            <person name="Winckler T."/>
            <person name="Tanaka Y."/>
            <person name="Shaulsky G."/>
            <person name="Schleicher M."/>
            <person name="Weinstock G.M."/>
            <person name="Rosenthal A."/>
            <person name="Cox E.C."/>
            <person name="Chisholm R.L."/>
            <person name="Gibbs R.A."/>
            <person name="Loomis W.F."/>
            <person name="Platzer M."/>
            <person name="Kay R.R."/>
            <person name="Williams J.G."/>
            <person name="Dear P.H."/>
            <person name="Noegel A.A."/>
            <person name="Barrell B.G."/>
            <person name="Kuspa A."/>
        </authorList>
    </citation>
    <scope>NUCLEOTIDE SEQUENCE [LARGE SCALE GENOMIC DNA]</scope>
    <source>
        <strain>AX4</strain>
    </source>
</reference>
<reference key="3">
    <citation type="journal article" date="1998" name="Dev. Biol.">
        <title>Signal transduction pathways leading to spore differentiation in Dictyostelium discoideum.</title>
        <authorList>
            <person name="Anjard C."/>
            <person name="Zeng C."/>
            <person name="Loomis W.F."/>
            <person name="Nellen W."/>
        </authorList>
    </citation>
    <scope>FUNCTION OF SDF-2</scope>
</reference>
<reference key="4">
    <citation type="journal article" date="1999" name="Mol. Cell. Biol.">
        <title>SDF-2 induction of terminal differentiation in Dictyostelium discoideum is mediated by the membrane-spanning sensor kinase DhkA.</title>
        <authorList>
            <person name="Wang N."/>
            <person name="Soderbom F."/>
            <person name="Anjard C."/>
            <person name="Shaulsky G."/>
            <person name="Loomis W.F."/>
        </authorList>
    </citation>
    <scope>FUNCTION OF SDF-2</scope>
    <scope>INTERACTION WITH DHKA</scope>
</reference>
<reference key="5">
    <citation type="journal article" date="2006" name="Development">
        <title>GABA induces terminal differentiation of Dictyostelium through a GABAB receptor.</title>
        <authorList>
            <person name="Anjard C."/>
            <person name="Loomis W.F."/>
        </authorList>
    </citation>
    <scope>INDUCTION</scope>
</reference>
<feature type="chain" id="PRO_0000328371" description="Acyl-CoA-binding protein">
    <location>
        <begin position="1"/>
        <end position="84"/>
    </location>
</feature>
<feature type="peptide" id="PRO_0000328372" description="SDF-2" evidence="2">
    <location>
        <begin position="18"/>
        <end position="52"/>
    </location>
</feature>
<feature type="domain" description="ACB" evidence="3">
    <location>
        <begin position="1"/>
        <end position="84"/>
    </location>
</feature>
<feature type="binding site" evidence="1">
    <location>
        <position position="12"/>
    </location>
    <ligand>
        <name>an acyl-CoA</name>
        <dbReference type="ChEBI" id="CHEBI:58342"/>
    </ligand>
</feature>
<feature type="binding site" evidence="1">
    <location>
        <begin position="27"/>
        <end position="31"/>
    </location>
    <ligand>
        <name>an acyl-CoA</name>
        <dbReference type="ChEBI" id="CHEBI:58342"/>
    </ligand>
</feature>
<feature type="binding site" evidence="1">
    <location>
        <position position="53"/>
    </location>
    <ligand>
        <name>an acyl-CoA</name>
        <dbReference type="ChEBI" id="CHEBI:58342"/>
    </ligand>
</feature>
<feature type="binding site" evidence="1">
    <location>
        <position position="72"/>
    </location>
    <ligand>
        <name>an acyl-CoA</name>
        <dbReference type="ChEBI" id="CHEBI:58342"/>
    </ligand>
</feature>